<keyword id="KW-0443">Lipid metabolism</keyword>
<keyword id="KW-0460">Magnesium</keyword>
<keyword id="KW-0808">Transferase</keyword>
<name>UPPS_GIAIC</name>
<sequence length="265" mass="29968">MIPMHVAVIMDGNGRWARKQLQERTFGHEQGVSVLESIVDECINCGIRFLTVYAFSTENWSRPPTEVSFLFELLSAAIQRVRTTYRERNVKVQFCGERTTQIPETVIAAMNCIEQDTAACTGLILSVCFNYGGHTEIAQACRSVLADCLEGDAVENIKTRLQMPIEQFIQQIDTHLYANLPPVDLLIRTGCEKRLSNFLPWHLAYAEIIFSDLLWPEFSVRAFKDCLDEFASRTRRFGGVQLSPMTGVYSDTHPHSSTNALSNHD</sequence>
<protein>
    <recommendedName>
        <fullName evidence="8">Di-trans,poly-cis-undecaprenyl-diphosphate synthase</fullName>
        <ecNumber evidence="3 5">2.5.1.31</ecNumber>
    </recommendedName>
    <alternativeName>
        <fullName evidence="7">Cis-prenyltransferase</fullName>
    </alternativeName>
</protein>
<reference key="1">
    <citation type="journal article" date="2007" name="Science">
        <title>Genomic minimalism in the early diverging intestinal parasite Giardia lamblia.</title>
        <authorList>
            <person name="Morrison H.G."/>
            <person name="McArthur A.G."/>
            <person name="Gillin F.D."/>
            <person name="Aley S.B."/>
            <person name="Adam R.D."/>
            <person name="Olsen G.J."/>
            <person name="Best A.A."/>
            <person name="Cande W.Z."/>
            <person name="Chen F."/>
            <person name="Cipriano M.J."/>
            <person name="Davids B.J."/>
            <person name="Dawson S.C."/>
            <person name="Elmendorf H.G."/>
            <person name="Hehl A.B."/>
            <person name="Holder M.E."/>
            <person name="Huse S.M."/>
            <person name="Kim U.U."/>
            <person name="Lasek-Nesselquist E."/>
            <person name="Manning G."/>
            <person name="Nigam A."/>
            <person name="Nixon J.E.J."/>
            <person name="Palm D."/>
            <person name="Passamaneck N.E."/>
            <person name="Prabhu A."/>
            <person name="Reich C.I."/>
            <person name="Reiner D.S."/>
            <person name="Samuelson J."/>
            <person name="Svard S.G."/>
            <person name="Sogin M.L."/>
        </authorList>
    </citation>
    <scope>NUCLEOTIDE SEQUENCE [LARGE SCALE GENOMIC DNA]</scope>
    <source>
        <strain>ATCC 50803 / WB clone C6</strain>
    </source>
</reference>
<reference key="2">
    <citation type="journal article" date="2010" name="Glycobiology">
        <title>Molecular characterization of the cis-prenyltransferase of Giardia lamblia.</title>
        <authorList>
            <person name="Grabinska K.A."/>
            <person name="Cui J."/>
            <person name="Chatterjee A."/>
            <person name="Guan Z."/>
            <person name="Raetz C.R."/>
            <person name="Robbins P.W."/>
            <person name="Samuelson J."/>
        </authorList>
    </citation>
    <scope>FUNCTION</scope>
    <scope>CATALYTIC ACTIVITY</scope>
    <scope>PATHWAY</scope>
</reference>
<reference key="3">
    <citation type="journal article" date="2014" name="Cell Metab.">
        <title>Mutation of Nogo-B receptor, a subunit of cis-prenyltransferase, causes a congenital disorder of glycosylation.</title>
        <authorList>
            <person name="Park E.J."/>
            <person name="Grabinska K.A."/>
            <person name="Guan Z."/>
            <person name="Stranecky V."/>
            <person name="Hartmannova H."/>
            <person name="Hodanova K."/>
            <person name="Baresova V."/>
            <person name="Sovova J."/>
            <person name="Jozsef L."/>
            <person name="Ondruskova N."/>
            <person name="Hansikova H."/>
            <person name="Honzik T."/>
            <person name="Zeman J."/>
            <person name="Hulkova H."/>
            <person name="Wen R."/>
            <person name="Kmoch S."/>
            <person name="Sessa W.C."/>
        </authorList>
    </citation>
    <scope>FUNCTION</scope>
</reference>
<reference key="4">
    <citation type="journal article" date="2017" name="J. Biol. Chem.">
        <title>A conserved C-terminal RXG motif in the NgBR subunit of cis-prenyltransferase is critical for prenyltransferase activity.</title>
        <authorList>
            <person name="Grabinska K.A."/>
            <person name="Edani B.H."/>
            <person name="Park E.J."/>
            <person name="Kraehling J.R."/>
            <person name="Sessa W.C."/>
        </authorList>
    </citation>
    <scope>CATALYTIC ACTIVITY</scope>
    <scope>FUNCTION</scope>
    <scope>MUTAGENESIS OF ARG-236 AND GLY-238</scope>
    <scope>PATHWAY</scope>
</reference>
<comment type="function">
    <text evidence="3 4 5">Cis-prenyl transferase involved in the synthesis of dolichol, a long-chain polyprenol that is utilized as a sugar carrier in protein glycosylation in the endoplasmic reticulum (ER). Catalyzes the sequential condensation of isopentenyl pyrophosphate (IPP) with farnesyl pyrophosphate (FPP) to produce a polyprenyl pyrophosphate which contains 11 (major) and 12 (minor) isoprene units.</text>
</comment>
<comment type="catalytic activity">
    <reaction evidence="3 5">
        <text>8 isopentenyl diphosphate + (2E,6E)-farnesyl diphosphate = di-trans,octa-cis-undecaprenyl diphosphate + 8 diphosphate</text>
        <dbReference type="Rhea" id="RHEA:27551"/>
        <dbReference type="ChEBI" id="CHEBI:33019"/>
        <dbReference type="ChEBI" id="CHEBI:58405"/>
        <dbReference type="ChEBI" id="CHEBI:128769"/>
        <dbReference type="ChEBI" id="CHEBI:175763"/>
        <dbReference type="EC" id="2.5.1.31"/>
    </reaction>
</comment>
<comment type="cofactor">
    <cofactor evidence="1">
        <name>Mg(2+)</name>
        <dbReference type="ChEBI" id="CHEBI:18420"/>
    </cofactor>
</comment>
<comment type="pathway">
    <text evidence="8">Protein modification; protein glycosylation.</text>
</comment>
<comment type="pathway">
    <text evidence="3 5">Lipid metabolism.</text>
</comment>
<comment type="miscellaneous">
    <text evidence="3">The synthetic pathway for dolichol synthesis is conserved in Giardia lamblia, even if some of the important enzymes are different from those of higher eukaryotes or remain unidentified.</text>
</comment>
<comment type="similarity">
    <text evidence="2">Belongs to the UPP synthase family.</text>
</comment>
<gene>
    <name evidence="7" type="primary">UPPS</name>
    <name evidence="6" type="ORF">GL50803_15256</name>
</gene>
<evidence type="ECO:0000250" key="1">
    <source>
        <dbReference type="UniProtKB" id="P60472"/>
    </source>
</evidence>
<evidence type="ECO:0000255" key="2">
    <source>
        <dbReference type="RuleBase" id="RU003962"/>
    </source>
</evidence>
<evidence type="ECO:0000269" key="3">
    <source>
    </source>
</evidence>
<evidence type="ECO:0000269" key="4">
    <source>
    </source>
</evidence>
<evidence type="ECO:0000269" key="5">
    <source>
    </source>
</evidence>
<evidence type="ECO:0000303" key="6">
    <source>
    </source>
</evidence>
<evidence type="ECO:0000303" key="7">
    <source>
    </source>
</evidence>
<evidence type="ECO:0000305" key="8">
    <source>
    </source>
</evidence>
<evidence type="ECO:0000305" key="9">
    <source>
    </source>
</evidence>
<proteinExistence type="evidence at protein level"/>
<organism>
    <name type="scientific">Giardia intestinalis (strain ATCC 50803 / WB clone C6)</name>
    <name type="common">Giardia lamblia</name>
    <dbReference type="NCBI Taxonomy" id="184922"/>
    <lineage>
        <taxon>Eukaryota</taxon>
        <taxon>Metamonada</taxon>
        <taxon>Diplomonadida</taxon>
        <taxon>Hexamitidae</taxon>
        <taxon>Giardiinae</taxon>
        <taxon>Giardia</taxon>
    </lineage>
</organism>
<feature type="chain" id="PRO_0000431404" description="Di-trans,poly-cis-undecaprenyl-diphosphate synthase">
    <location>
        <begin position="1"/>
        <end position="265"/>
    </location>
</feature>
<feature type="short sequence motif" description="RXG motif; crucial for prenyltransferase activity" evidence="9">
    <location>
        <begin position="236"/>
        <end position="238"/>
    </location>
</feature>
<feature type="mutagenesis site" description="5-fold decrease in catalytic activity." evidence="5">
    <original>R</original>
    <variation>H</variation>
    <location>
        <position position="236"/>
    </location>
</feature>
<feature type="mutagenesis site" description="Loss of catalytic activity." evidence="5">
    <original>G</original>
    <variation>A</variation>
    <location>
        <position position="238"/>
    </location>
</feature>
<accession>A8B1Z2</accession>
<dbReference type="EC" id="2.5.1.31" evidence="3 5"/>
<dbReference type="EMBL" id="AACB02000001">
    <property type="protein sequence ID" value="EDO82194.1"/>
    <property type="molecule type" value="Genomic_DNA"/>
</dbReference>
<dbReference type="RefSeq" id="XP_001709868.1">
    <property type="nucleotide sequence ID" value="XM_001709816.1"/>
</dbReference>
<dbReference type="SMR" id="A8B1Z2"/>
<dbReference type="STRING" id="184922.A8B1Z2"/>
<dbReference type="EnsemblProtists" id="EDO82194">
    <property type="protein sequence ID" value="EDO82194"/>
    <property type="gene ID" value="GL50803_15256"/>
</dbReference>
<dbReference type="GeneID" id="5702774"/>
<dbReference type="KEGG" id="gla:GL50803_0015256"/>
<dbReference type="VEuPathDB" id="GiardiaDB:GL50803_15256"/>
<dbReference type="HOGENOM" id="CLU_038505_1_1_1"/>
<dbReference type="OMA" id="YWPAFRE"/>
<dbReference type="UniPathway" id="UPA00378"/>
<dbReference type="GO" id="GO:0045547">
    <property type="term" value="F:ditrans,polycis-polyprenyl diphosphate synthase [(2E,6E)-farnesyl diphosphate specific] activity"/>
    <property type="evidence" value="ECO:0000314"/>
    <property type="project" value="UniProtKB"/>
</dbReference>
<dbReference type="GO" id="GO:0008834">
    <property type="term" value="F:ditrans,polycis-undecaprenyl-diphosphate synthase [(2E,6E)-farnesyl-diphosphate specific] activity"/>
    <property type="evidence" value="ECO:0007669"/>
    <property type="project" value="UniProtKB-EC"/>
</dbReference>
<dbReference type="GO" id="GO:0006489">
    <property type="term" value="P:dolichyl diphosphate biosynthetic process"/>
    <property type="evidence" value="ECO:0000314"/>
    <property type="project" value="UniProtKB"/>
</dbReference>
<dbReference type="CDD" id="cd00475">
    <property type="entry name" value="Cis_IPPS"/>
    <property type="match status" value="1"/>
</dbReference>
<dbReference type="FunFam" id="3.40.1180.10:FF:000019">
    <property type="entry name" value="Alkyl transferase"/>
    <property type="match status" value="1"/>
</dbReference>
<dbReference type="Gene3D" id="3.40.1180.10">
    <property type="entry name" value="Decaprenyl diphosphate synthase-like"/>
    <property type="match status" value="1"/>
</dbReference>
<dbReference type="HAMAP" id="MF_01139">
    <property type="entry name" value="ISPT"/>
    <property type="match status" value="1"/>
</dbReference>
<dbReference type="InterPro" id="IPR001441">
    <property type="entry name" value="UPP_synth-like"/>
</dbReference>
<dbReference type="InterPro" id="IPR036424">
    <property type="entry name" value="UPP_synth-like_sf"/>
</dbReference>
<dbReference type="NCBIfam" id="TIGR00055">
    <property type="entry name" value="uppS"/>
    <property type="match status" value="1"/>
</dbReference>
<dbReference type="PANTHER" id="PTHR10291:SF43">
    <property type="entry name" value="DEHYDRODOLICHYL DIPHOSPHATE SYNTHASE COMPLEX SUBUNIT DHDDS"/>
    <property type="match status" value="1"/>
</dbReference>
<dbReference type="PANTHER" id="PTHR10291">
    <property type="entry name" value="DEHYDRODOLICHYL DIPHOSPHATE SYNTHASE FAMILY MEMBER"/>
    <property type="match status" value="1"/>
</dbReference>
<dbReference type="Pfam" id="PF01255">
    <property type="entry name" value="Prenyltransf"/>
    <property type="match status" value="1"/>
</dbReference>
<dbReference type="SUPFAM" id="SSF64005">
    <property type="entry name" value="Undecaprenyl diphosphate synthase"/>
    <property type="match status" value="1"/>
</dbReference>